<dbReference type="EC" id="4.3.99.3" evidence="1"/>
<dbReference type="EMBL" id="AP006878">
    <property type="protein sequence ID" value="BAD85387.1"/>
    <property type="molecule type" value="Genomic_DNA"/>
</dbReference>
<dbReference type="RefSeq" id="WP_011250149.1">
    <property type="nucleotide sequence ID" value="NC_006624.1"/>
</dbReference>
<dbReference type="SMR" id="Q5JGE6"/>
<dbReference type="FunCoup" id="Q5JGE6">
    <property type="interactions" value="1"/>
</dbReference>
<dbReference type="STRING" id="69014.TK1198"/>
<dbReference type="EnsemblBacteria" id="BAD85387">
    <property type="protein sequence ID" value="BAD85387"/>
    <property type="gene ID" value="TK1198"/>
</dbReference>
<dbReference type="GeneID" id="78447714"/>
<dbReference type="KEGG" id="tko:TK1198"/>
<dbReference type="PATRIC" id="fig|69014.16.peg.1173"/>
<dbReference type="eggNOG" id="arCOG02173">
    <property type="taxonomic scope" value="Archaea"/>
</dbReference>
<dbReference type="HOGENOM" id="CLU_066739_1_0_2"/>
<dbReference type="InParanoid" id="Q5JGE6"/>
<dbReference type="OrthoDB" id="7980at2157"/>
<dbReference type="PhylomeDB" id="Q5JGE6"/>
<dbReference type="UniPathway" id="UPA00391"/>
<dbReference type="Proteomes" id="UP000000536">
    <property type="component" value="Chromosome"/>
</dbReference>
<dbReference type="GO" id="GO:0051539">
    <property type="term" value="F:4 iron, 4 sulfur cluster binding"/>
    <property type="evidence" value="ECO:0007669"/>
    <property type="project" value="UniProtKB-UniRule"/>
</dbReference>
<dbReference type="GO" id="GO:0016840">
    <property type="term" value="F:carbon-nitrogen lyase activity"/>
    <property type="evidence" value="ECO:0007669"/>
    <property type="project" value="UniProtKB-UniRule"/>
</dbReference>
<dbReference type="GO" id="GO:0000287">
    <property type="term" value="F:magnesium ion binding"/>
    <property type="evidence" value="ECO:0007669"/>
    <property type="project" value="UniProtKB-UniRule"/>
</dbReference>
<dbReference type="GO" id="GO:1904047">
    <property type="term" value="F:S-adenosyl-L-methionine binding"/>
    <property type="evidence" value="ECO:0007669"/>
    <property type="project" value="UniProtKB-UniRule"/>
</dbReference>
<dbReference type="CDD" id="cd01335">
    <property type="entry name" value="Radical_SAM"/>
    <property type="match status" value="1"/>
</dbReference>
<dbReference type="Gene3D" id="3.20.20.70">
    <property type="entry name" value="Aldolase class I"/>
    <property type="match status" value="1"/>
</dbReference>
<dbReference type="HAMAP" id="MF_00917">
    <property type="entry name" value="QueE"/>
    <property type="match status" value="1"/>
</dbReference>
<dbReference type="InterPro" id="IPR024924">
    <property type="entry name" value="7-CO-7-deazaguanine_synth-like"/>
</dbReference>
<dbReference type="InterPro" id="IPR013785">
    <property type="entry name" value="Aldolase_TIM"/>
</dbReference>
<dbReference type="InterPro" id="IPR034457">
    <property type="entry name" value="Organic_radical-activating"/>
</dbReference>
<dbReference type="InterPro" id="IPR007197">
    <property type="entry name" value="rSAM"/>
</dbReference>
<dbReference type="PANTHER" id="PTHR30352:SF5">
    <property type="entry name" value="PYRUVATE FORMATE-LYASE 1-ACTIVATING ENZYME"/>
    <property type="match status" value="1"/>
</dbReference>
<dbReference type="PANTHER" id="PTHR30352">
    <property type="entry name" value="PYRUVATE FORMATE-LYASE-ACTIVATING ENZYME"/>
    <property type="match status" value="1"/>
</dbReference>
<dbReference type="Pfam" id="PF13353">
    <property type="entry name" value="Fer4_12"/>
    <property type="match status" value="1"/>
</dbReference>
<dbReference type="Pfam" id="PF04055">
    <property type="entry name" value="Radical_SAM"/>
    <property type="match status" value="1"/>
</dbReference>
<dbReference type="PIRSF" id="PIRSF000370">
    <property type="entry name" value="QueE"/>
    <property type="match status" value="1"/>
</dbReference>
<dbReference type="SFLD" id="SFLDS00029">
    <property type="entry name" value="Radical_SAM"/>
    <property type="match status" value="1"/>
</dbReference>
<dbReference type="SUPFAM" id="SSF102114">
    <property type="entry name" value="Radical SAM enzymes"/>
    <property type="match status" value="1"/>
</dbReference>
<dbReference type="PROSITE" id="PS51918">
    <property type="entry name" value="RADICAL_SAM"/>
    <property type="match status" value="1"/>
</dbReference>
<feature type="chain" id="PRO_0000416222" description="7-carboxy-7-deazaguanine synthase">
    <location>
        <begin position="1"/>
        <end position="253"/>
    </location>
</feature>
<feature type="domain" description="Radical SAM core" evidence="2">
    <location>
        <begin position="23"/>
        <end position="253"/>
    </location>
</feature>
<feature type="binding site" evidence="1">
    <location>
        <begin position="12"/>
        <end position="14"/>
    </location>
    <ligand>
        <name>substrate</name>
    </ligand>
</feature>
<feature type="binding site" evidence="1">
    <location>
        <position position="32"/>
    </location>
    <ligand>
        <name>substrate</name>
    </ligand>
</feature>
<feature type="binding site" evidence="1">
    <location>
        <position position="36"/>
    </location>
    <ligand>
        <name>[4Fe-4S] cluster</name>
        <dbReference type="ChEBI" id="CHEBI:49883"/>
        <note>4Fe-4S-S-AdoMet</note>
    </ligand>
</feature>
<feature type="binding site" evidence="1">
    <location>
        <position position="40"/>
    </location>
    <ligand>
        <name>[4Fe-4S] cluster</name>
        <dbReference type="ChEBI" id="CHEBI:49883"/>
        <note>4Fe-4S-S-AdoMet</note>
    </ligand>
</feature>
<feature type="binding site" evidence="1">
    <location>
        <position position="43"/>
    </location>
    <ligand>
        <name>[4Fe-4S] cluster</name>
        <dbReference type="ChEBI" id="CHEBI:49883"/>
        <note>4Fe-4S-S-AdoMet</note>
    </ligand>
</feature>
<feature type="binding site" evidence="1">
    <location>
        <position position="45"/>
    </location>
    <ligand>
        <name>Mg(2+)</name>
        <dbReference type="ChEBI" id="CHEBI:18420"/>
    </ligand>
</feature>
<feature type="binding site" evidence="1">
    <location>
        <position position="98"/>
    </location>
    <ligand>
        <name>substrate</name>
    </ligand>
</feature>
<feature type="binding site" evidence="1">
    <location>
        <position position="100"/>
    </location>
    <ligand>
        <name>S-adenosyl-L-methionine</name>
        <dbReference type="ChEBI" id="CHEBI:59789"/>
    </ligand>
</feature>
<proteinExistence type="inferred from homology"/>
<protein>
    <recommendedName>
        <fullName evidence="1">7-carboxy-7-deazaguanine synthase</fullName>
        <shortName evidence="1">CDG synthase</shortName>
        <ecNumber evidence="1">4.3.99.3</ecNumber>
    </recommendedName>
    <alternativeName>
        <fullName evidence="1">Archaeosine biosynthesis protein QueE</fullName>
    </alternativeName>
</protein>
<evidence type="ECO:0000255" key="1">
    <source>
        <dbReference type="HAMAP-Rule" id="MF_00917"/>
    </source>
</evidence>
<evidence type="ECO:0000255" key="2">
    <source>
        <dbReference type="PROSITE-ProRule" id="PRU01266"/>
    </source>
</evidence>
<evidence type="ECO:0000269" key="3">
    <source>
    </source>
</evidence>
<accession>Q5JGE6</accession>
<gene>
    <name evidence="1" type="primary">queE</name>
    <name type="ordered locus">TK1198</name>
</gene>
<sequence>MRVIMAEVFNSWQGEGGSVEGSAFGRRQIFVRFAGCDLHCAWCDSREYIDASRVSSWRYEVKPFTGRFEYRPNPASVEEVVEAVLRLDTGDIHSISYTGGEPTLQVKPLMALMERMKELGFDNFLETHGGLPELIRDVAPLTDYASVDIKDESAKATEDWKGLVLREVESIRILKEAGAKTYAKLVVTSETKVENVQWYASLLKGLAPLVIQPREPIEVSQAKLMEFYREAARIMGRKNVGLSFQVHKYLNVL</sequence>
<name>QUEE_THEKO</name>
<organism>
    <name type="scientific">Thermococcus kodakarensis (strain ATCC BAA-918 / JCM 12380 / KOD1)</name>
    <name type="common">Pyrococcus kodakaraensis (strain KOD1)</name>
    <dbReference type="NCBI Taxonomy" id="69014"/>
    <lineage>
        <taxon>Archaea</taxon>
        <taxon>Methanobacteriati</taxon>
        <taxon>Methanobacteriota</taxon>
        <taxon>Thermococci</taxon>
        <taxon>Thermococcales</taxon>
        <taxon>Thermococcaceae</taxon>
        <taxon>Thermococcus</taxon>
    </lineage>
</organism>
<comment type="function">
    <text evidence="1">Catalyzes the complex heterocyclic radical-mediated conversion of 6-carboxy-5,6,7,8-tetrahydropterin (CPH4) to 7-carboxy-7-deazaguanine (CDG), a step common to the biosynthetic pathways of all 7-deazapurine-containing compounds.</text>
</comment>
<comment type="catalytic activity">
    <reaction evidence="1">
        <text>6-carboxy-5,6,7,8-tetrahydropterin + H(+) = 7-carboxy-7-deazaguanine + NH4(+)</text>
        <dbReference type="Rhea" id="RHEA:27974"/>
        <dbReference type="ChEBI" id="CHEBI:15378"/>
        <dbReference type="ChEBI" id="CHEBI:28938"/>
        <dbReference type="ChEBI" id="CHEBI:61032"/>
        <dbReference type="ChEBI" id="CHEBI:61036"/>
        <dbReference type="EC" id="4.3.99.3"/>
    </reaction>
</comment>
<comment type="cofactor">
    <cofactor evidence="1">
        <name>[4Fe-4S] cluster</name>
        <dbReference type="ChEBI" id="CHEBI:49883"/>
    </cofactor>
    <text evidence="1">Binds 1 [4Fe-4S] cluster. The cluster is coordinated with 3 cysteines and an exchangeable S-adenosyl-L-methionine.</text>
</comment>
<comment type="cofactor">
    <cofactor evidence="1">
        <name>S-adenosyl-L-methionine</name>
        <dbReference type="ChEBI" id="CHEBI:59789"/>
    </cofactor>
    <text evidence="1">Binds 1 S-adenosyl-L-methionine per subunit.</text>
</comment>
<comment type="cofactor">
    <cofactor evidence="1">
        <name>Mg(2+)</name>
        <dbReference type="ChEBI" id="CHEBI:18420"/>
    </cofactor>
</comment>
<comment type="pathway">
    <text evidence="1">Purine metabolism; 7-cyano-7-deazaguanine biosynthesis.</text>
</comment>
<comment type="subunit">
    <text evidence="1">Homodimer.</text>
</comment>
<comment type="disruption phenotype">
    <text evidence="3">Temperature sensitive growth at 85 but not 93 degrees Celsius.</text>
</comment>
<comment type="similarity">
    <text evidence="1">Belongs to the radical SAM superfamily. 7-carboxy-7-deazaguanine synthase family.</text>
</comment>
<keyword id="KW-0004">4Fe-4S</keyword>
<keyword id="KW-0408">Iron</keyword>
<keyword id="KW-0411">Iron-sulfur</keyword>
<keyword id="KW-0456">Lyase</keyword>
<keyword id="KW-0460">Magnesium</keyword>
<keyword id="KW-0479">Metal-binding</keyword>
<keyword id="KW-1185">Reference proteome</keyword>
<keyword id="KW-0949">S-adenosyl-L-methionine</keyword>
<reference key="1">
    <citation type="journal article" date="2005" name="Genome Res.">
        <title>Complete genome sequence of the hyperthermophilic archaeon Thermococcus kodakaraensis KOD1 and comparison with Pyrococcus genomes.</title>
        <authorList>
            <person name="Fukui T."/>
            <person name="Atomi H."/>
            <person name="Kanai T."/>
            <person name="Matsumi R."/>
            <person name="Fujiwara S."/>
            <person name="Imanaka T."/>
        </authorList>
    </citation>
    <scope>NUCLEOTIDE SEQUENCE [LARGE SCALE GENOMIC DNA]</scope>
    <source>
        <strain>ATCC BAA-918 / JCM 12380 / KOD1</strain>
    </source>
</reference>
<reference key="2">
    <citation type="journal article" date="2019" name="Nucleic Acids Res.">
        <title>Random mutagenesis of a hyperthermophilic archaeon identified tRNA modifications associated with cellular hyperthermotolerance.</title>
        <authorList>
            <person name="Orita I."/>
            <person name="Futatsuishi R."/>
            <person name="Adachi K."/>
            <person name="Ohira T."/>
            <person name="Kaneko A."/>
            <person name="Minowa K."/>
            <person name="Suzuki M."/>
            <person name="Tamura T."/>
            <person name="Nakamura S."/>
            <person name="Imanaka T."/>
            <person name="Suzuki T."/>
            <person name="Fukui T."/>
        </authorList>
    </citation>
    <scope>DISRUPTION PHENOTYPE</scope>
    <source>
        <strain>ATCC BAA-918 / JCM 12380 / KOD1</strain>
    </source>
</reference>